<sequence length="90" mass="10585">MGKYDRYISFKNANWESQSSGVMDGLKPHIEAADSPFWVYFMRQRELAHQRGLDDLRVLHNFLPTLRELLEELDDQPTLALLEQLEESCM</sequence>
<gene>
    <name evidence="1" type="primary">cowN</name>
    <name type="ordered locus">Msil_0801</name>
</gene>
<proteinExistence type="inferred from homology"/>
<keyword id="KW-0535">Nitrogen fixation</keyword>
<keyword id="KW-1185">Reference proteome</keyword>
<accession>B8ER26</accession>
<reference key="1">
    <citation type="journal article" date="2010" name="J. Bacteriol.">
        <title>Complete genome sequence of the aerobic facultative methanotroph Methylocella silvestris BL2.</title>
        <authorList>
            <person name="Chen Y."/>
            <person name="Crombie A."/>
            <person name="Rahman M.T."/>
            <person name="Dedysh S.N."/>
            <person name="Liesack W."/>
            <person name="Stott M.B."/>
            <person name="Alam M."/>
            <person name="Theisen A.R."/>
            <person name="Murrell J.C."/>
            <person name="Dunfield P.F."/>
        </authorList>
    </citation>
    <scope>NUCLEOTIDE SEQUENCE [LARGE SCALE GENOMIC DNA]</scope>
    <source>
        <strain>DSM 15510 / CIP 108128 / LMG 27833 / NCIMB 13906 / BL2</strain>
    </source>
</reference>
<name>COWN_METSB</name>
<comment type="function">
    <text evidence="1">Is required to sustain N(2)-dependent growth in the presence of low levels of carbon monoxide (CO). Probably acts by protecting the N(2) fixation ability of the nitrogenase complex, which is inactivated in the presence of CO.</text>
</comment>
<comment type="similarity">
    <text evidence="1">Belongs to the CowN family.</text>
</comment>
<dbReference type="EMBL" id="CP001280">
    <property type="protein sequence ID" value="ACK49771.1"/>
    <property type="molecule type" value="Genomic_DNA"/>
</dbReference>
<dbReference type="RefSeq" id="WP_012589841.1">
    <property type="nucleotide sequence ID" value="NC_011666.1"/>
</dbReference>
<dbReference type="SMR" id="B8ER26"/>
<dbReference type="STRING" id="395965.Msil_0801"/>
<dbReference type="KEGG" id="msl:Msil_0801"/>
<dbReference type="eggNOG" id="ENOG5032TZQ">
    <property type="taxonomic scope" value="Bacteria"/>
</dbReference>
<dbReference type="HOGENOM" id="CLU_149349_0_0_5"/>
<dbReference type="OrthoDB" id="7689335at2"/>
<dbReference type="Proteomes" id="UP000002257">
    <property type="component" value="Chromosome"/>
</dbReference>
<dbReference type="GO" id="GO:0009399">
    <property type="term" value="P:nitrogen fixation"/>
    <property type="evidence" value="ECO:0007669"/>
    <property type="project" value="UniProtKB-UniRule"/>
</dbReference>
<dbReference type="HAMAP" id="MF_02117">
    <property type="entry name" value="CowN"/>
    <property type="match status" value="1"/>
</dbReference>
<dbReference type="InterPro" id="IPR024899">
    <property type="entry name" value="CowN"/>
</dbReference>
<dbReference type="NCBIfam" id="NF033689">
    <property type="entry name" value="N2Fix_CO_CowN"/>
    <property type="match status" value="1"/>
</dbReference>
<dbReference type="Pfam" id="PF20543">
    <property type="entry name" value="CowN"/>
    <property type="match status" value="1"/>
</dbReference>
<protein>
    <recommendedName>
        <fullName evidence="1">N(2)-fixation sustaining protein CowN</fullName>
    </recommendedName>
    <alternativeName>
        <fullName evidence="1">CO weal-nitrogenase</fullName>
    </alternativeName>
</protein>
<feature type="chain" id="PRO_0000407261" description="N(2)-fixation sustaining protein CowN">
    <location>
        <begin position="1"/>
        <end position="90"/>
    </location>
</feature>
<organism>
    <name type="scientific">Methylocella silvestris (strain DSM 15510 / CIP 108128 / LMG 27833 / NCIMB 13906 / BL2)</name>
    <dbReference type="NCBI Taxonomy" id="395965"/>
    <lineage>
        <taxon>Bacteria</taxon>
        <taxon>Pseudomonadati</taxon>
        <taxon>Pseudomonadota</taxon>
        <taxon>Alphaproteobacteria</taxon>
        <taxon>Hyphomicrobiales</taxon>
        <taxon>Beijerinckiaceae</taxon>
        <taxon>Methylocella</taxon>
    </lineage>
</organism>
<evidence type="ECO:0000255" key="1">
    <source>
        <dbReference type="HAMAP-Rule" id="MF_02117"/>
    </source>
</evidence>